<sequence length="315" mass="34669">MTAVESRPAGVIGTSQSPSHRPFGARVKAFVALTKPRIIELLLITTVPVMFLAEQGVPNLKLVLLTCVGGYLSAGGANALNMYIDRDIDALMDRTSQRPLVTGMVSPVECLVFGITLAIVSTLLFGFTVNWLSAWLSLGALLFYVVVYTMILKRRTSQNIVWGGIAGCLPVLIGWSAVTNSMSWAPVILFGVMFFWTPPHYWPLSMKVKEDYARVGVPMLPVIASNKVVARQIVIYSWVMVVVSLLLQPLGYTGWFYTAVALAAGGMWLWEAHGLQNRAKAEVTGGKLKEMRLFHWSITYVSVLFLAIAVDPFLR</sequence>
<feature type="chain" id="PRO_0000327169" description="Protoheme IX farnesyltransferase">
    <location>
        <begin position="1"/>
        <end position="315"/>
    </location>
</feature>
<feature type="transmembrane region" description="Helical" evidence="1">
    <location>
        <begin position="38"/>
        <end position="58"/>
    </location>
</feature>
<feature type="transmembrane region" description="Helical" evidence="1">
    <location>
        <begin position="62"/>
        <end position="82"/>
    </location>
</feature>
<feature type="transmembrane region" description="Helical" evidence="1">
    <location>
        <begin position="111"/>
        <end position="131"/>
    </location>
</feature>
<feature type="transmembrane region" description="Helical" evidence="1">
    <location>
        <begin position="132"/>
        <end position="152"/>
    </location>
</feature>
<feature type="transmembrane region" description="Helical" evidence="1">
    <location>
        <begin position="159"/>
        <end position="179"/>
    </location>
</feature>
<feature type="transmembrane region" description="Helical" evidence="1">
    <location>
        <begin position="184"/>
        <end position="204"/>
    </location>
</feature>
<feature type="transmembrane region" description="Helical" evidence="1">
    <location>
        <begin position="233"/>
        <end position="253"/>
    </location>
</feature>
<feature type="transmembrane region" description="Helical" evidence="1">
    <location>
        <begin position="255"/>
        <end position="275"/>
    </location>
</feature>
<feature type="transmembrane region" description="Helical" evidence="1">
    <location>
        <begin position="293"/>
        <end position="313"/>
    </location>
</feature>
<accession>Q9XAC2</accession>
<name>COXX_STRCO</name>
<protein>
    <recommendedName>
        <fullName evidence="1">Protoheme IX farnesyltransferase</fullName>
        <ecNumber evidence="1">2.5.1.141</ecNumber>
    </recommendedName>
    <alternativeName>
        <fullName evidence="1">Heme B farnesyltransferase</fullName>
    </alternativeName>
    <alternativeName>
        <fullName evidence="1">Heme O synthase</fullName>
    </alternativeName>
</protein>
<reference key="1">
    <citation type="journal article" date="2002" name="Nature">
        <title>Complete genome sequence of the model actinomycete Streptomyces coelicolor A3(2).</title>
        <authorList>
            <person name="Bentley S.D."/>
            <person name="Chater K.F."/>
            <person name="Cerdeno-Tarraga A.-M."/>
            <person name="Challis G.L."/>
            <person name="Thomson N.R."/>
            <person name="James K.D."/>
            <person name="Harris D.E."/>
            <person name="Quail M.A."/>
            <person name="Kieser H."/>
            <person name="Harper D."/>
            <person name="Bateman A."/>
            <person name="Brown S."/>
            <person name="Chandra G."/>
            <person name="Chen C.W."/>
            <person name="Collins M."/>
            <person name="Cronin A."/>
            <person name="Fraser A."/>
            <person name="Goble A."/>
            <person name="Hidalgo J."/>
            <person name="Hornsby T."/>
            <person name="Howarth S."/>
            <person name="Huang C.-H."/>
            <person name="Kieser T."/>
            <person name="Larke L."/>
            <person name="Murphy L.D."/>
            <person name="Oliver K."/>
            <person name="O'Neil S."/>
            <person name="Rabbinowitsch E."/>
            <person name="Rajandream M.A."/>
            <person name="Rutherford K.M."/>
            <person name="Rutter S."/>
            <person name="Seeger K."/>
            <person name="Saunders D."/>
            <person name="Sharp S."/>
            <person name="Squares R."/>
            <person name="Squares S."/>
            <person name="Taylor K."/>
            <person name="Warren T."/>
            <person name="Wietzorrek A."/>
            <person name="Woodward J.R."/>
            <person name="Barrell B.G."/>
            <person name="Parkhill J."/>
            <person name="Hopwood D.A."/>
        </authorList>
    </citation>
    <scope>NUCLEOTIDE SEQUENCE [LARGE SCALE GENOMIC DNA]</scope>
    <source>
        <strain>ATCC BAA-471 / A3(2) / M145</strain>
    </source>
</reference>
<proteinExistence type="inferred from homology"/>
<organism>
    <name type="scientific">Streptomyces coelicolor (strain ATCC BAA-471 / A3(2) / M145)</name>
    <dbReference type="NCBI Taxonomy" id="100226"/>
    <lineage>
        <taxon>Bacteria</taxon>
        <taxon>Bacillati</taxon>
        <taxon>Actinomycetota</taxon>
        <taxon>Actinomycetes</taxon>
        <taxon>Kitasatosporales</taxon>
        <taxon>Streptomycetaceae</taxon>
        <taxon>Streptomyces</taxon>
        <taxon>Streptomyces albidoflavus group</taxon>
    </lineage>
</organism>
<keyword id="KW-1003">Cell membrane</keyword>
<keyword id="KW-0350">Heme biosynthesis</keyword>
<keyword id="KW-0472">Membrane</keyword>
<keyword id="KW-1185">Reference proteome</keyword>
<keyword id="KW-0808">Transferase</keyword>
<keyword id="KW-0812">Transmembrane</keyword>
<keyword id="KW-1133">Transmembrane helix</keyword>
<gene>
    <name evidence="1" type="primary">ctaB</name>
    <name type="ordered locus">SCO1934</name>
    <name type="ORF">SCC22.16c</name>
</gene>
<evidence type="ECO:0000255" key="1">
    <source>
        <dbReference type="HAMAP-Rule" id="MF_00154"/>
    </source>
</evidence>
<evidence type="ECO:0000305" key="2"/>
<comment type="function">
    <text evidence="1">Converts heme B (protoheme IX) to heme O by substitution of the vinyl group on carbon 2 of heme B porphyrin ring with a hydroxyethyl farnesyl side group.</text>
</comment>
<comment type="catalytic activity">
    <reaction evidence="1">
        <text>heme b + (2E,6E)-farnesyl diphosphate + H2O = Fe(II)-heme o + diphosphate</text>
        <dbReference type="Rhea" id="RHEA:28070"/>
        <dbReference type="ChEBI" id="CHEBI:15377"/>
        <dbReference type="ChEBI" id="CHEBI:33019"/>
        <dbReference type="ChEBI" id="CHEBI:60344"/>
        <dbReference type="ChEBI" id="CHEBI:60530"/>
        <dbReference type="ChEBI" id="CHEBI:175763"/>
        <dbReference type="EC" id="2.5.1.141"/>
    </reaction>
</comment>
<comment type="pathway">
    <text evidence="1">Porphyrin-containing compound metabolism; heme O biosynthesis; heme O from protoheme: step 1/1.</text>
</comment>
<comment type="subcellular location">
    <subcellularLocation>
        <location evidence="1">Cell membrane</location>
        <topology evidence="1">Multi-pass membrane protein</topology>
    </subcellularLocation>
</comment>
<comment type="miscellaneous">
    <text evidence="1">Carbon 2 of the heme B porphyrin ring is defined according to the Fischer nomenclature.</text>
</comment>
<comment type="similarity">
    <text evidence="1">Belongs to the UbiA prenyltransferase family. Protoheme IX farnesyltransferase subfamily.</text>
</comment>
<comment type="sequence caution" evidence="2">
    <conflict type="erroneous initiation">
        <sequence resource="EMBL-CDS" id="CAB50759"/>
    </conflict>
</comment>
<dbReference type="EC" id="2.5.1.141" evidence="1"/>
<dbReference type="EMBL" id="AL939110">
    <property type="protein sequence ID" value="CAB50759.1"/>
    <property type="status" value="ALT_INIT"/>
    <property type="molecule type" value="Genomic_DNA"/>
</dbReference>
<dbReference type="PIR" id="T36006">
    <property type="entry name" value="T36006"/>
</dbReference>
<dbReference type="RefSeq" id="NP_626199.1">
    <property type="nucleotide sequence ID" value="NC_003888.3"/>
</dbReference>
<dbReference type="SMR" id="Q9XAC2"/>
<dbReference type="FunCoup" id="Q9XAC2">
    <property type="interactions" value="371"/>
</dbReference>
<dbReference type="STRING" id="100226.gene:17759531"/>
<dbReference type="PaxDb" id="100226-SCO1934"/>
<dbReference type="KEGG" id="sco:SCO1934"/>
<dbReference type="PATRIC" id="fig|100226.15.peg.1960"/>
<dbReference type="eggNOG" id="COG0109">
    <property type="taxonomic scope" value="Bacteria"/>
</dbReference>
<dbReference type="HOGENOM" id="CLU_029631_0_1_11"/>
<dbReference type="InParanoid" id="Q9XAC2"/>
<dbReference type="OrthoDB" id="9814417at2"/>
<dbReference type="PhylomeDB" id="Q9XAC2"/>
<dbReference type="UniPathway" id="UPA00834">
    <property type="reaction ID" value="UER00712"/>
</dbReference>
<dbReference type="Proteomes" id="UP000001973">
    <property type="component" value="Chromosome"/>
</dbReference>
<dbReference type="GO" id="GO:0005886">
    <property type="term" value="C:plasma membrane"/>
    <property type="evidence" value="ECO:0007669"/>
    <property type="project" value="UniProtKB-SubCell"/>
</dbReference>
<dbReference type="GO" id="GO:0008495">
    <property type="term" value="F:protoheme IX farnesyltransferase activity"/>
    <property type="evidence" value="ECO:0000318"/>
    <property type="project" value="GO_Central"/>
</dbReference>
<dbReference type="GO" id="GO:0006783">
    <property type="term" value="P:heme biosynthetic process"/>
    <property type="evidence" value="ECO:0000318"/>
    <property type="project" value="GO_Central"/>
</dbReference>
<dbReference type="GO" id="GO:0048034">
    <property type="term" value="P:heme O biosynthetic process"/>
    <property type="evidence" value="ECO:0007669"/>
    <property type="project" value="UniProtKB-UniRule"/>
</dbReference>
<dbReference type="CDD" id="cd13957">
    <property type="entry name" value="PT_UbiA_Cox10"/>
    <property type="match status" value="1"/>
</dbReference>
<dbReference type="FunFam" id="1.10.357.140:FF:000001">
    <property type="entry name" value="Protoheme IX farnesyltransferase"/>
    <property type="match status" value="1"/>
</dbReference>
<dbReference type="Gene3D" id="1.10.357.140">
    <property type="entry name" value="UbiA prenyltransferase"/>
    <property type="match status" value="1"/>
</dbReference>
<dbReference type="HAMAP" id="MF_00154">
    <property type="entry name" value="CyoE_CtaB"/>
    <property type="match status" value="1"/>
</dbReference>
<dbReference type="InterPro" id="IPR006369">
    <property type="entry name" value="Protohaem_IX_farnesylTrfase"/>
</dbReference>
<dbReference type="InterPro" id="IPR000537">
    <property type="entry name" value="UbiA_prenyltransferase"/>
</dbReference>
<dbReference type="InterPro" id="IPR030470">
    <property type="entry name" value="UbiA_prenylTrfase_CS"/>
</dbReference>
<dbReference type="InterPro" id="IPR044878">
    <property type="entry name" value="UbiA_sf"/>
</dbReference>
<dbReference type="NCBIfam" id="TIGR01473">
    <property type="entry name" value="cyoE_ctaB"/>
    <property type="match status" value="1"/>
</dbReference>
<dbReference type="NCBIfam" id="NF003349">
    <property type="entry name" value="PRK04375.1-2"/>
    <property type="match status" value="1"/>
</dbReference>
<dbReference type="PANTHER" id="PTHR43448:SF7">
    <property type="entry name" value="4-HYDROXYBENZOATE SOLANESYLTRANSFERASE"/>
    <property type="match status" value="1"/>
</dbReference>
<dbReference type="PANTHER" id="PTHR43448">
    <property type="entry name" value="PROTOHEME IX FARNESYLTRANSFERASE, MITOCHONDRIAL"/>
    <property type="match status" value="1"/>
</dbReference>
<dbReference type="Pfam" id="PF01040">
    <property type="entry name" value="UbiA"/>
    <property type="match status" value="1"/>
</dbReference>
<dbReference type="PROSITE" id="PS00943">
    <property type="entry name" value="UBIA"/>
    <property type="match status" value="1"/>
</dbReference>